<dbReference type="EMBL" id="AE014295">
    <property type="protein sequence ID" value="AAN24953.1"/>
    <property type="molecule type" value="Genomic_DNA"/>
</dbReference>
<dbReference type="RefSeq" id="NP_696317.1">
    <property type="nucleotide sequence ID" value="NC_004307.2"/>
</dbReference>
<dbReference type="SMR" id="Q8G572"/>
<dbReference type="STRING" id="206672.BL1148"/>
<dbReference type="EnsemblBacteria" id="AAN24953">
    <property type="protein sequence ID" value="AAN24953"/>
    <property type="gene ID" value="BL1148"/>
</dbReference>
<dbReference type="KEGG" id="blo:BL1148"/>
<dbReference type="PATRIC" id="fig|206672.9.peg.858"/>
<dbReference type="HOGENOM" id="CLU_028163_0_1_11"/>
<dbReference type="OrthoDB" id="9803619at2"/>
<dbReference type="PhylomeDB" id="Q8G572"/>
<dbReference type="Proteomes" id="UP000000439">
    <property type="component" value="Chromosome"/>
</dbReference>
<dbReference type="GO" id="GO:0008832">
    <property type="term" value="F:dGTPase activity"/>
    <property type="evidence" value="ECO:0007669"/>
    <property type="project" value="TreeGrafter"/>
</dbReference>
<dbReference type="GO" id="GO:0006203">
    <property type="term" value="P:dGTP catabolic process"/>
    <property type="evidence" value="ECO:0007669"/>
    <property type="project" value="TreeGrafter"/>
</dbReference>
<dbReference type="CDD" id="cd00077">
    <property type="entry name" value="HDc"/>
    <property type="match status" value="1"/>
</dbReference>
<dbReference type="Gene3D" id="1.10.3210.10">
    <property type="entry name" value="Hypothetical protein af1432"/>
    <property type="match status" value="1"/>
</dbReference>
<dbReference type="InterPro" id="IPR006261">
    <property type="entry name" value="dGTPase"/>
</dbReference>
<dbReference type="InterPro" id="IPR050135">
    <property type="entry name" value="dGTPase-like"/>
</dbReference>
<dbReference type="InterPro" id="IPR003607">
    <property type="entry name" value="HD/PDEase_dom"/>
</dbReference>
<dbReference type="InterPro" id="IPR006674">
    <property type="entry name" value="HD_domain"/>
</dbReference>
<dbReference type="InterPro" id="IPR026875">
    <property type="entry name" value="PHydrolase_assoc_dom"/>
</dbReference>
<dbReference type="NCBIfam" id="TIGR01353">
    <property type="entry name" value="dGTP_triPase"/>
    <property type="match status" value="1"/>
</dbReference>
<dbReference type="NCBIfam" id="NF002829">
    <property type="entry name" value="PRK03007.1"/>
    <property type="match status" value="1"/>
</dbReference>
<dbReference type="PANTHER" id="PTHR11373:SF32">
    <property type="entry name" value="DEOXYGUANOSINETRIPHOSPHATE TRIPHOSPHOHYDROLASE"/>
    <property type="match status" value="1"/>
</dbReference>
<dbReference type="PANTHER" id="PTHR11373">
    <property type="entry name" value="DEOXYNUCLEOSIDE TRIPHOSPHATE TRIPHOSPHOHYDROLASE"/>
    <property type="match status" value="1"/>
</dbReference>
<dbReference type="Pfam" id="PF01966">
    <property type="entry name" value="HD"/>
    <property type="match status" value="1"/>
</dbReference>
<dbReference type="Pfam" id="PF13286">
    <property type="entry name" value="HD_assoc"/>
    <property type="match status" value="1"/>
</dbReference>
<dbReference type="SMART" id="SM00471">
    <property type="entry name" value="HDc"/>
    <property type="match status" value="1"/>
</dbReference>
<dbReference type="SUPFAM" id="SSF109604">
    <property type="entry name" value="HD-domain/PDEase-like"/>
    <property type="match status" value="1"/>
</dbReference>
<dbReference type="PROSITE" id="PS51831">
    <property type="entry name" value="HD"/>
    <property type="match status" value="1"/>
</dbReference>
<feature type="chain" id="PRO_0000205291" description="Deoxyguanosinetriphosphate triphosphohydrolase-like protein">
    <location>
        <begin position="1"/>
        <end position="475"/>
    </location>
</feature>
<feature type="domain" description="HD" evidence="1">
    <location>
        <begin position="118"/>
        <end position="272"/>
    </location>
</feature>
<reference key="1">
    <citation type="journal article" date="2002" name="Proc. Natl. Acad. Sci. U.S.A.">
        <title>The genome sequence of Bifidobacterium longum reflects its adaptation to the human gastrointestinal tract.</title>
        <authorList>
            <person name="Schell M.A."/>
            <person name="Karmirantzou M."/>
            <person name="Snel B."/>
            <person name="Vilanova D."/>
            <person name="Berger B."/>
            <person name="Pessi G."/>
            <person name="Zwahlen M.-C."/>
            <person name="Desiere F."/>
            <person name="Bork P."/>
            <person name="Delley M."/>
            <person name="Pridmore R.D."/>
            <person name="Arigoni F."/>
        </authorList>
    </citation>
    <scope>NUCLEOTIDE SEQUENCE [LARGE SCALE GENOMIC DNA]</scope>
    <source>
        <strain>NCC 2705</strain>
    </source>
</reference>
<protein>
    <recommendedName>
        <fullName>Deoxyguanosinetriphosphate triphosphohydrolase-like protein</fullName>
    </recommendedName>
</protein>
<keyword id="KW-0378">Hydrolase</keyword>
<keyword id="KW-1185">Reference proteome</keyword>
<name>DGTL1_BIFLO</name>
<comment type="similarity">
    <text evidence="2">Belongs to the dGTPase family. Type 2 subfamily.</text>
</comment>
<organism>
    <name type="scientific">Bifidobacterium longum (strain NCC 2705)</name>
    <dbReference type="NCBI Taxonomy" id="206672"/>
    <lineage>
        <taxon>Bacteria</taxon>
        <taxon>Bacillati</taxon>
        <taxon>Actinomycetota</taxon>
        <taxon>Actinomycetes</taxon>
        <taxon>Bifidobacteriales</taxon>
        <taxon>Bifidobacteriaceae</taxon>
        <taxon>Bifidobacterium</taxon>
    </lineage>
</organism>
<gene>
    <name type="primary">dgt</name>
    <name type="ordered locus">BL1148</name>
</gene>
<accession>Q8G572</accession>
<evidence type="ECO:0000255" key="1">
    <source>
        <dbReference type="PROSITE-ProRule" id="PRU01175"/>
    </source>
</evidence>
<evidence type="ECO:0000305" key="2"/>
<proteinExistence type="inferred from homology"/>
<sequence>MPLTCAERHIFGKSAPISRICAVELTSVAHIREVGITAADMCAYAWHMETTLDGEQVLSDEGYNAFDEERWAPEPPKSKSRTAFERDRARLIHSSALRRLGAKSQILIAGTDDFARTRLTHTLEVAQIGRQIGALLGCDPDVVDCACLAHDLGHPPFGHNGERALADIAGNIGGFEGNAQTMRILTRLEPKIFHPDGRSAGVNLTRAALDAAVKYPWTLAEADRHPKGERSKKFCVYPDDEPVFRWLKIGAPQAAKPMECQIMDLSDDIAYSVHDVEDSIATGAFDPIVLADPKMLDHIIEQTRAWYGAKWDADKLLAAFMRLRREHLFPAHFNGSRESLAQLKNITSDLIGRFCWSVETATRDTYGPGPLTRYSSNIVIPEDTNYEIVALKGIAVYFVMAPREREPFHQEELKIVSDLVDVLMADSPLPSDALESQFLADWNESTNDNERLRVAIDQVASLTDNSALALHSILC</sequence>